<name>ANXA1_RAT</name>
<feature type="initiator methionine" description="Removed" evidence="9">
    <location>
        <position position="1"/>
    </location>
</feature>
<feature type="chain" id="PRO_0000067464" description="Annexin A1">
    <location>
        <begin position="2"/>
        <end position="346"/>
    </location>
</feature>
<feature type="peptide" id="PRO_0000454562" description="Annexin Ac2-26" evidence="2">
    <location>
        <begin position="2"/>
        <end position="26"/>
    </location>
</feature>
<feature type="repeat" description="Annexin 1" evidence="6">
    <location>
        <begin position="42"/>
        <end position="113"/>
    </location>
</feature>
<feature type="repeat" description="Annexin 2" evidence="6">
    <location>
        <begin position="114"/>
        <end position="185"/>
    </location>
</feature>
<feature type="repeat" description="Annexin 3" evidence="6">
    <location>
        <begin position="197"/>
        <end position="269"/>
    </location>
</feature>
<feature type="repeat" description="Annexin 4" evidence="6">
    <location>
        <begin position="273"/>
        <end position="344"/>
    </location>
</feature>
<feature type="binding site" evidence="4">
    <location>
        <position position="59"/>
    </location>
    <ligand>
        <name>Ca(2+)</name>
        <dbReference type="ChEBI" id="CHEBI:29108"/>
        <label>1</label>
    </ligand>
</feature>
<feature type="binding site" evidence="4">
    <location>
        <position position="60"/>
    </location>
    <ligand>
        <name>Ca(2+)</name>
        <dbReference type="ChEBI" id="CHEBI:29108"/>
        <label>1</label>
    </ligand>
</feature>
<feature type="binding site" evidence="4">
    <location>
        <position position="62"/>
    </location>
    <ligand>
        <name>Ca(2+)</name>
        <dbReference type="ChEBI" id="CHEBI:29108"/>
        <label>1</label>
    </ligand>
</feature>
<feature type="binding site" evidence="4">
    <location>
        <position position="97"/>
    </location>
    <ligand>
        <name>Ca(2+)</name>
        <dbReference type="ChEBI" id="CHEBI:29108"/>
        <label>2</label>
    </ligand>
</feature>
<feature type="binding site" evidence="4">
    <location>
        <position position="100"/>
    </location>
    <ligand>
        <name>Ca(2+)</name>
        <dbReference type="ChEBI" id="CHEBI:29108"/>
        <label>2</label>
    </ligand>
</feature>
<feature type="binding site" evidence="4">
    <location>
        <position position="105"/>
    </location>
    <ligand>
        <name>Ca(2+)</name>
        <dbReference type="ChEBI" id="CHEBI:29108"/>
        <label>2</label>
    </ligand>
</feature>
<feature type="binding site" evidence="4">
    <location>
        <position position="127"/>
    </location>
    <ligand>
        <name>Ca(2+)</name>
        <dbReference type="ChEBI" id="CHEBI:29108"/>
        <label>3</label>
    </ligand>
</feature>
<feature type="binding site" evidence="4">
    <location>
        <position position="129"/>
    </location>
    <ligand>
        <name>Ca(2+)</name>
        <dbReference type="ChEBI" id="CHEBI:29108"/>
        <label>3</label>
    </ligand>
</feature>
<feature type="binding site" evidence="4">
    <location>
        <position position="131"/>
    </location>
    <ligand>
        <name>Ca(2+)</name>
        <dbReference type="ChEBI" id="CHEBI:29108"/>
        <label>3</label>
    </ligand>
</feature>
<feature type="binding site" evidence="4">
    <location>
        <position position="132"/>
    </location>
    <ligand>
        <name>Ca(2+)</name>
        <dbReference type="ChEBI" id="CHEBI:29108"/>
        <label>4</label>
    </ligand>
</feature>
<feature type="binding site" evidence="4">
    <location>
        <position position="134"/>
    </location>
    <ligand>
        <name>Ca(2+)</name>
        <dbReference type="ChEBI" id="CHEBI:29108"/>
        <label>4</label>
    </ligand>
</feature>
<feature type="binding site" evidence="4">
    <location>
        <position position="171"/>
    </location>
    <ligand>
        <name>Ca(2+)</name>
        <dbReference type="ChEBI" id="CHEBI:29108"/>
        <label>3</label>
    </ligand>
</feature>
<feature type="binding site" evidence="4">
    <location>
        <position position="210"/>
    </location>
    <ligand>
        <name>Ca(2+)</name>
        <dbReference type="ChEBI" id="CHEBI:29108"/>
        <label>5</label>
    </ligand>
</feature>
<feature type="binding site" evidence="4">
    <location>
        <position position="213"/>
    </location>
    <ligand>
        <name>Ca(2+)</name>
        <dbReference type="ChEBI" id="CHEBI:29108"/>
        <label>5</label>
    </ligand>
</feature>
<feature type="binding site" evidence="4">
    <location>
        <position position="215"/>
    </location>
    <ligand>
        <name>Ca(2+)</name>
        <dbReference type="ChEBI" id="CHEBI:29108"/>
        <label>5</label>
    </ligand>
</feature>
<feature type="binding site" evidence="4">
    <location>
        <position position="253"/>
    </location>
    <ligand>
        <name>Ca(2+)</name>
        <dbReference type="ChEBI" id="CHEBI:29108"/>
        <label>6</label>
    </ligand>
</feature>
<feature type="binding site" evidence="4">
    <location>
        <position position="255"/>
    </location>
    <ligand>
        <name>Ca(2+)</name>
        <dbReference type="ChEBI" id="CHEBI:29108"/>
        <label>5</label>
    </ligand>
</feature>
<feature type="binding site" evidence="4">
    <location>
        <position position="256"/>
    </location>
    <ligand>
        <name>Ca(2+)</name>
        <dbReference type="ChEBI" id="CHEBI:29108"/>
        <label>6</label>
    </ligand>
</feature>
<feature type="binding site" evidence="4">
    <location>
        <position position="261"/>
    </location>
    <ligand>
        <name>Ca(2+)</name>
        <dbReference type="ChEBI" id="CHEBI:29108"/>
        <label>6</label>
    </ligand>
</feature>
<feature type="binding site" evidence="4">
    <location>
        <position position="286"/>
    </location>
    <ligand>
        <name>Ca(2+)</name>
        <dbReference type="ChEBI" id="CHEBI:29108"/>
        <label>7</label>
    </ligand>
</feature>
<feature type="binding site" evidence="4">
    <location>
        <position position="288"/>
    </location>
    <ligand>
        <name>Ca(2+)</name>
        <dbReference type="ChEBI" id="CHEBI:29108"/>
        <label>7</label>
    </ligand>
</feature>
<feature type="binding site" evidence="4">
    <location>
        <position position="290"/>
    </location>
    <ligand>
        <name>Ca(2+)</name>
        <dbReference type="ChEBI" id="CHEBI:29108"/>
        <label>7</label>
    </ligand>
</feature>
<feature type="binding site" evidence="4">
    <location>
        <position position="328"/>
    </location>
    <ligand>
        <name>Ca(2+)</name>
        <dbReference type="ChEBI" id="CHEBI:29108"/>
        <label>8</label>
    </ligand>
</feature>
<feature type="binding site" evidence="4">
    <location>
        <position position="330"/>
    </location>
    <ligand>
        <name>Ca(2+)</name>
        <dbReference type="ChEBI" id="CHEBI:29108"/>
        <label>7</label>
    </ligand>
</feature>
<feature type="binding site" evidence="4">
    <location>
        <position position="331"/>
    </location>
    <ligand>
        <name>Ca(2+)</name>
        <dbReference type="ChEBI" id="CHEBI:29108"/>
        <label>8</label>
    </ligand>
</feature>
<feature type="binding site" evidence="4">
    <location>
        <position position="336"/>
    </location>
    <ligand>
        <name>Ca(2+)</name>
        <dbReference type="ChEBI" id="CHEBI:29108"/>
        <label>8</label>
    </ligand>
</feature>
<feature type="site" description="Cleavage; by CTSG" evidence="2">
    <location>
        <begin position="26"/>
        <end position="27"/>
    </location>
</feature>
<feature type="modified residue" description="N-acetylalanine" evidence="9">
    <location>
        <position position="2"/>
    </location>
</feature>
<feature type="modified residue" description="Phosphoserine; by TRPM7" evidence="2">
    <location>
        <position position="5"/>
    </location>
</feature>
<feature type="modified residue" description="Phosphotyrosine; by EGFR" evidence="2">
    <location>
        <position position="21"/>
    </location>
</feature>
<feature type="modified residue" description="Phosphoserine; by PKC" evidence="2">
    <location>
        <position position="27"/>
    </location>
</feature>
<feature type="modified residue" description="Phosphoserine" evidence="2">
    <location>
        <position position="34"/>
    </location>
</feature>
<feature type="modified residue" description="Phosphoserine" evidence="2">
    <location>
        <position position="37"/>
    </location>
</feature>
<feature type="modified residue" description="N6-acetyllysine" evidence="3">
    <location>
        <position position="58"/>
    </location>
</feature>
<feature type="modified residue" description="Phosphothreonine" evidence="2">
    <location>
        <position position="136"/>
    </location>
</feature>
<feature type="modified residue" description="N6-acetyllysine" evidence="2">
    <location>
        <position position="312"/>
    </location>
</feature>
<feature type="disulfide bond" evidence="4">
    <location>
        <begin position="324"/>
        <end position="343"/>
    </location>
</feature>
<feature type="cross-link" description="Isoglutamyl lysine isopeptide (Gln-Lys) (interchain with K-?)" evidence="1">
    <location>
        <position position="19"/>
    </location>
</feature>
<feature type="cross-link" description="Glycyl lysine isopeptide (Lys-Gly) (interchain with G-Cter in SUMO1); alternate" evidence="2">
    <location>
        <position position="214"/>
    </location>
</feature>
<feature type="cross-link" description="Glycyl lysine isopeptide (Lys-Gly) (interchain with G-Cter in SUMO2); alternate" evidence="2">
    <location>
        <position position="214"/>
    </location>
</feature>
<feature type="cross-link" description="Glycyl lysine isopeptide (Lys-Gly) (interchain with G-Cter in SUMO1)" evidence="3">
    <location>
        <position position="257"/>
    </location>
</feature>
<feature type="cross-link" description="Glycyl lysine isopeptide (Lys-Gly) (interchain with G-Cter in SUMO1)" evidence="2">
    <location>
        <position position="332"/>
    </location>
</feature>
<feature type="sequence conflict" description="In Ref. 3; AAB19866." evidence="12" ref="3">
    <original>P</original>
    <variation>S</variation>
    <location>
        <position position="322"/>
    </location>
</feature>
<organism>
    <name type="scientific">Rattus norvegicus</name>
    <name type="common">Rat</name>
    <dbReference type="NCBI Taxonomy" id="10116"/>
    <lineage>
        <taxon>Eukaryota</taxon>
        <taxon>Metazoa</taxon>
        <taxon>Chordata</taxon>
        <taxon>Craniata</taxon>
        <taxon>Vertebrata</taxon>
        <taxon>Euteleostomi</taxon>
        <taxon>Mammalia</taxon>
        <taxon>Eutheria</taxon>
        <taxon>Euarchontoglires</taxon>
        <taxon>Glires</taxon>
        <taxon>Rodentia</taxon>
        <taxon>Myomorpha</taxon>
        <taxon>Muroidea</taxon>
        <taxon>Muridae</taxon>
        <taxon>Murinae</taxon>
        <taxon>Rattus</taxon>
    </lineage>
</organism>
<keyword id="KW-0007">Acetylation</keyword>
<keyword id="KW-1064">Adaptive immunity</keyword>
<keyword id="KW-0041">Annexin</keyword>
<keyword id="KW-0106">Calcium</keyword>
<keyword id="KW-0111">Calcium/phospholipid-binding</keyword>
<keyword id="KW-1003">Cell membrane</keyword>
<keyword id="KW-0966">Cell projection</keyword>
<keyword id="KW-0969">Cilium</keyword>
<keyword id="KW-0963">Cytoplasm</keyword>
<keyword id="KW-0968">Cytoplasmic vesicle</keyword>
<keyword id="KW-0903">Direct protein sequencing</keyword>
<keyword id="KW-1015">Disulfide bond</keyword>
<keyword id="KW-0967">Endosome</keyword>
<keyword id="KW-0391">Immunity</keyword>
<keyword id="KW-0395">Inflammatory response</keyword>
<keyword id="KW-0399">Innate immunity</keyword>
<keyword id="KW-1017">Isopeptide bond</keyword>
<keyword id="KW-0472">Membrane</keyword>
<keyword id="KW-0479">Metal-binding</keyword>
<keyword id="KW-0539">Nucleus</keyword>
<keyword id="KW-0593">Phospholipase A2 inhibitor</keyword>
<keyword id="KW-0597">Phosphoprotein</keyword>
<keyword id="KW-1185">Reference proteome</keyword>
<keyword id="KW-0677">Repeat</keyword>
<keyword id="KW-0964">Secreted</keyword>
<keyword id="KW-0832">Ubl conjugation</keyword>
<protein>
    <recommendedName>
        <fullName>Annexin A1</fullName>
    </recommendedName>
    <alternativeName>
        <fullName>Annexin I</fullName>
    </alternativeName>
    <alternativeName>
        <fullName>Annexin-1</fullName>
    </alternativeName>
    <alternativeName>
        <fullName evidence="11">Calpactin II</fullName>
    </alternativeName>
    <alternativeName>
        <fullName>Calpactin-2</fullName>
    </alternativeName>
    <alternativeName>
        <fullName>Chromobindin-9</fullName>
    </alternativeName>
    <alternativeName>
        <fullName evidence="10">Lipocortin I</fullName>
    </alternativeName>
    <alternativeName>
        <fullName>Phospholipase A2 inhibitory protein</fullName>
    </alternativeName>
    <alternativeName>
        <fullName>p35</fullName>
    </alternativeName>
    <component>
        <recommendedName>
            <fullName evidence="2">Annexin Ac2-26</fullName>
        </recommendedName>
    </component>
</protein>
<reference key="1">
    <citation type="journal article" date="1987" name="Nucleic Acids Res.">
        <title>Rat lipocortin I cDNA.</title>
        <authorList>
            <person name="Tamaki M."/>
            <person name="Nakamura E."/>
            <person name="Nishikubo C."/>
            <person name="Sakata T."/>
            <person name="Shin M."/>
            <person name="Teraoka H."/>
        </authorList>
    </citation>
    <scope>NUCLEOTIDE SEQUENCE [MRNA]</scope>
    <scope>FUNCTION</scope>
    <source>
        <tissue>Lung</tissue>
    </source>
</reference>
<reference key="2">
    <citation type="journal article" date="1988" name="Gene">
        <title>Molecular cloning and expression in Escherichia coli of the cDNA coding for rat lipocortin I (calpactin II).</title>
        <authorList>
            <person name="Shimizu Y."/>
            <person name="Takabayashi E."/>
            <person name="Yano S."/>
            <person name="Shimizu N."/>
            <person name="Yamada K."/>
            <person name="Gushima H."/>
        </authorList>
    </citation>
    <scope>NUCLEOTIDE SEQUENCE [MRNA]</scope>
</reference>
<reference key="3">
    <citation type="journal article" date="1991" name="Biochemistry">
        <title>Correlation of gene and protein structure of rat and human lipocortin I.</title>
        <authorList>
            <person name="Kovacic R.T."/>
            <person name="Tizard R."/>
            <person name="Cate R.L."/>
            <person name="Frey A.Z."/>
            <person name="Wallner B.P."/>
        </authorList>
    </citation>
    <scope>NUCLEOTIDE SEQUENCE [GENOMIC DNA]</scope>
    <source>
        <strain>Sprague-Dawley</strain>
        <tissue>Liver</tissue>
    </source>
</reference>
<reference key="4">
    <citation type="journal article" date="2004" name="Genome Res.">
        <title>The status, quality, and expansion of the NIH full-length cDNA project: the Mammalian Gene Collection (MGC).</title>
        <authorList>
            <consortium name="The MGC Project Team"/>
        </authorList>
    </citation>
    <scope>NUCLEOTIDE SEQUENCE [LARGE SCALE MRNA]</scope>
    <source>
        <tissue>Prostate</tissue>
    </source>
</reference>
<reference key="5">
    <citation type="submission" date="2009-06" db="UniProtKB">
        <authorList>
            <person name="Bienvenut W.V."/>
            <person name="von Kriegsheim A."/>
            <person name="Kolch W."/>
        </authorList>
    </citation>
    <scope>PROTEIN SEQUENCE OF 2-9; 59-71; 99-124; 129-144; 167-177; 186-204; 214-228; 251-281 AND 304-312</scope>
    <scope>CLEAVAGE OF INITIATOR METHIONINE</scope>
    <scope>ACETYLATION AT ALA-2</scope>
    <scope>IDENTIFICATION BY MASS SPECTROMETRY</scope>
    <source>
        <tissue>Fibroblast</tissue>
    </source>
</reference>
<reference key="6">
    <citation type="submission" date="2006-11" db="UniProtKB">
        <authorList>
            <person name="Lubec G."/>
            <person name="Afjehi-Sadat L."/>
        </authorList>
    </citation>
    <scope>PROTEIN SEQUENCE OF 99-113; 129-144 AND 215-228</scope>
    <scope>IDENTIFICATION BY MASS SPECTROMETRY</scope>
    <source>
        <strain>Sprague-Dawley</strain>
        <tissue>Spinal cord</tissue>
    </source>
</reference>
<reference key="7">
    <citation type="journal article" date="1986" name="J. Biol. Chem.">
        <title>A calcium-dependent 35-kilodalton substrate for epidermal growth factor receptor/kinase isolated from normal tissue.</title>
        <authorList>
            <person name="De B.K."/>
            <person name="Misono K.S."/>
            <person name="Lukas T.J."/>
            <person name="Mroczkowski B."/>
            <person name="Cohen S."/>
        </authorList>
    </citation>
    <scope>TISSUE SPECIFICITY</scope>
    <scope>FUNCTION</scope>
    <scope>SUBCELLULAR LOCATION</scope>
</reference>
<reference key="8">
    <citation type="journal article" date="2002" name="Mediators Inflamm.">
        <title>Annexin 1 localisation in tissue eosinophils as detected by electron microscopy.</title>
        <authorList>
            <person name="Oliani S.M."/>
            <person name="Damazo A.S."/>
            <person name="Perretti M."/>
        </authorList>
    </citation>
    <scope>SUBCELLULAR LOCATION</scope>
    <scope>TISSUE SPECIFICITY</scope>
</reference>
<reference key="9">
    <citation type="journal article" date="2008" name="Br. J. Pharmacol.">
        <title>Annexin-A1: a pivotal regulator of the innate and adaptive immune systems.</title>
        <authorList>
            <person name="D'Acquisto F."/>
            <person name="Perretti M."/>
            <person name="Flower R.J."/>
        </authorList>
    </citation>
    <scope>REVIEW</scope>
</reference>
<reference key="10">
    <citation type="journal article" date="2012" name="Nat. Commun.">
        <title>Quantitative maps of protein phosphorylation sites across 14 different rat organs and tissues.</title>
        <authorList>
            <person name="Lundby A."/>
            <person name="Secher A."/>
            <person name="Lage K."/>
            <person name="Nordsborg N.B."/>
            <person name="Dmytriyev A."/>
            <person name="Lundby C."/>
            <person name="Olsen J.V."/>
        </authorList>
    </citation>
    <scope>IDENTIFICATION BY MASS SPECTROMETRY [LARGE SCALE ANALYSIS]</scope>
</reference>
<sequence>MAMVSEFLKQACYIEKQEQEYVQAVKSYKGGPGSAVSPYPSFNPSSDVAALHKAIMVKGVDEATIIDILTKRTNAQRQQIKAAYLQETGKPLDETLKKALTGHLEEVVLAMLKTPAQFDADELRAAMKGLGTDEDTLIEILTTRSNQQIREITRVYREELKRDLAKDITSDTSGDFRNALLALAKGDRCEDMSVNQDLADTDARALYEAGERRKGTDVNVFNTILTTRSYPHLRKVFQNYRKYSQHDMNKALDLELKGDIEKCLTTIVKCATSTPAFFAEKLYEAMKGAGTRHKTLIRIMVSRSEIDMNEIKVFYQKKYGIPLCQAILDETKGDYEKILVALCGGN</sequence>
<dbReference type="EMBL" id="Y00446">
    <property type="protein sequence ID" value="CAA68500.1"/>
    <property type="molecule type" value="mRNA"/>
</dbReference>
<dbReference type="EMBL" id="M19967">
    <property type="protein sequence ID" value="AAA40861.1"/>
    <property type="molecule type" value="mRNA"/>
</dbReference>
<dbReference type="EMBL" id="S57478">
    <property type="protein sequence ID" value="AAB19866.1"/>
    <property type="molecule type" value="Genomic_DNA"/>
</dbReference>
<dbReference type="EMBL" id="S57447">
    <property type="protein sequence ID" value="AAB19866.1"/>
    <property type="status" value="JOINED"/>
    <property type="molecule type" value="Genomic_DNA"/>
</dbReference>
<dbReference type="EMBL" id="S57450">
    <property type="protein sequence ID" value="AAB19866.1"/>
    <property type="status" value="JOINED"/>
    <property type="molecule type" value="Genomic_DNA"/>
</dbReference>
<dbReference type="EMBL" id="S57455">
    <property type="protein sequence ID" value="AAB19866.1"/>
    <property type="status" value="JOINED"/>
    <property type="molecule type" value="Genomic_DNA"/>
</dbReference>
<dbReference type="EMBL" id="S57459">
    <property type="protein sequence ID" value="AAB19866.1"/>
    <property type="status" value="JOINED"/>
    <property type="molecule type" value="Genomic_DNA"/>
</dbReference>
<dbReference type="EMBL" id="S57463">
    <property type="protein sequence ID" value="AAB19866.1"/>
    <property type="status" value="JOINED"/>
    <property type="molecule type" value="Genomic_DNA"/>
</dbReference>
<dbReference type="EMBL" id="S57466">
    <property type="protein sequence ID" value="AAB19866.1"/>
    <property type="status" value="JOINED"/>
    <property type="molecule type" value="Genomic_DNA"/>
</dbReference>
<dbReference type="EMBL" id="S57468">
    <property type="protein sequence ID" value="AAB19866.1"/>
    <property type="status" value="JOINED"/>
    <property type="molecule type" value="Genomic_DNA"/>
</dbReference>
<dbReference type="EMBL" id="S57470">
    <property type="protein sequence ID" value="AAB19866.1"/>
    <property type="status" value="JOINED"/>
    <property type="molecule type" value="Genomic_DNA"/>
</dbReference>
<dbReference type="EMBL" id="S57472">
    <property type="protein sequence ID" value="AAB19866.1"/>
    <property type="status" value="JOINED"/>
    <property type="molecule type" value="Genomic_DNA"/>
</dbReference>
<dbReference type="EMBL" id="S57474">
    <property type="protein sequence ID" value="AAB19866.1"/>
    <property type="status" value="JOINED"/>
    <property type="molecule type" value="Genomic_DNA"/>
</dbReference>
<dbReference type="EMBL" id="S57476">
    <property type="protein sequence ID" value="AAB19866.1"/>
    <property type="status" value="JOINED"/>
    <property type="molecule type" value="Genomic_DNA"/>
</dbReference>
<dbReference type="EMBL" id="BC061710">
    <property type="protein sequence ID" value="AAH61710.1"/>
    <property type="molecule type" value="mRNA"/>
</dbReference>
<dbReference type="PIR" id="JT0303">
    <property type="entry name" value="LURT1"/>
</dbReference>
<dbReference type="RefSeq" id="NP_037036.1">
    <property type="nucleotide sequence ID" value="NM_012904.2"/>
</dbReference>
<dbReference type="RefSeq" id="XP_008758517.1">
    <property type="nucleotide sequence ID" value="XM_008760295.2"/>
</dbReference>
<dbReference type="RefSeq" id="XP_038957533.1">
    <property type="nucleotide sequence ID" value="XM_039101605.1"/>
</dbReference>
<dbReference type="RefSeq" id="XP_063137796.1">
    <property type="nucleotide sequence ID" value="XM_063281726.1"/>
</dbReference>
<dbReference type="SMR" id="P07150"/>
<dbReference type="BioGRID" id="247419">
    <property type="interactions" value="5"/>
</dbReference>
<dbReference type="FunCoup" id="P07150">
    <property type="interactions" value="392"/>
</dbReference>
<dbReference type="IntAct" id="P07150">
    <property type="interactions" value="2"/>
</dbReference>
<dbReference type="STRING" id="10116.ENSRNOP00000023664"/>
<dbReference type="iPTMnet" id="P07150"/>
<dbReference type="PhosphoSitePlus" id="P07150"/>
<dbReference type="PaxDb" id="10116-ENSRNOP00000023664"/>
<dbReference type="Ensembl" id="ENSRNOT00000096060.1">
    <property type="protein sequence ID" value="ENSRNOP00000090466.1"/>
    <property type="gene ID" value="ENSRNOG00000017469.7"/>
</dbReference>
<dbReference type="GeneID" id="25380"/>
<dbReference type="KEGG" id="rno:25380"/>
<dbReference type="UCSC" id="RGD:2118">
    <property type="organism name" value="rat"/>
</dbReference>
<dbReference type="AGR" id="RGD:2118"/>
<dbReference type="CTD" id="301"/>
<dbReference type="RGD" id="2118">
    <property type="gene designation" value="Anxa1"/>
</dbReference>
<dbReference type="eggNOG" id="KOG0819">
    <property type="taxonomic scope" value="Eukaryota"/>
</dbReference>
<dbReference type="GeneTree" id="ENSGT00940000155221"/>
<dbReference type="HOGENOM" id="CLU_025300_0_0_1"/>
<dbReference type="InParanoid" id="P07150"/>
<dbReference type="OrthoDB" id="37886at2759"/>
<dbReference type="Reactome" id="R-RNO-416476">
    <property type="pathway name" value="G alpha (q) signalling events"/>
</dbReference>
<dbReference type="Reactome" id="R-RNO-418594">
    <property type="pathway name" value="G alpha (i) signalling events"/>
</dbReference>
<dbReference type="Reactome" id="R-RNO-444473">
    <property type="pathway name" value="Formyl peptide receptors bind formyl peptides and many other ligands"/>
</dbReference>
<dbReference type="PRO" id="PR:P07150"/>
<dbReference type="Proteomes" id="UP000002494">
    <property type="component" value="Chromosome 1"/>
</dbReference>
<dbReference type="Bgee" id="ENSRNOG00000017469">
    <property type="expression patterns" value="Expressed in lung and 19 other cell types or tissues"/>
</dbReference>
<dbReference type="GO" id="GO:0005884">
    <property type="term" value="C:actin filament"/>
    <property type="evidence" value="ECO:0000266"/>
    <property type="project" value="RGD"/>
</dbReference>
<dbReference type="GO" id="GO:0016324">
    <property type="term" value="C:apical plasma membrane"/>
    <property type="evidence" value="ECO:0000250"/>
    <property type="project" value="UniProtKB"/>
</dbReference>
<dbReference type="GO" id="GO:0016323">
    <property type="term" value="C:basolateral plasma membrane"/>
    <property type="evidence" value="ECO:0007669"/>
    <property type="project" value="UniProtKB-SubCell"/>
</dbReference>
<dbReference type="GO" id="GO:0009986">
    <property type="term" value="C:cell surface"/>
    <property type="evidence" value="ECO:0000266"/>
    <property type="project" value="RGD"/>
</dbReference>
<dbReference type="GO" id="GO:0001533">
    <property type="term" value="C:cornified envelope"/>
    <property type="evidence" value="ECO:0000266"/>
    <property type="project" value="RGD"/>
</dbReference>
<dbReference type="GO" id="GO:0005737">
    <property type="term" value="C:cytoplasm"/>
    <property type="evidence" value="ECO:0000266"/>
    <property type="project" value="RGD"/>
</dbReference>
<dbReference type="GO" id="GO:0031901">
    <property type="term" value="C:early endosome membrane"/>
    <property type="evidence" value="ECO:0000250"/>
    <property type="project" value="UniProtKB"/>
</dbReference>
<dbReference type="GO" id="GO:0005768">
    <property type="term" value="C:endosome"/>
    <property type="evidence" value="ECO:0000266"/>
    <property type="project" value="RGD"/>
</dbReference>
<dbReference type="GO" id="GO:0070062">
    <property type="term" value="C:extracellular exosome"/>
    <property type="evidence" value="ECO:0000250"/>
    <property type="project" value="UniProtKB"/>
</dbReference>
<dbReference type="GO" id="GO:0005615">
    <property type="term" value="C:extracellular space"/>
    <property type="evidence" value="ECO:0000314"/>
    <property type="project" value="RGD"/>
</dbReference>
<dbReference type="GO" id="GO:0016328">
    <property type="term" value="C:lateral plasma membrane"/>
    <property type="evidence" value="ECO:0000250"/>
    <property type="project" value="UniProtKB"/>
</dbReference>
<dbReference type="GO" id="GO:0042629">
    <property type="term" value="C:mast cell granule"/>
    <property type="evidence" value="ECO:0000314"/>
    <property type="project" value="RGD"/>
</dbReference>
<dbReference type="GO" id="GO:0031966">
    <property type="term" value="C:mitochondrial membrane"/>
    <property type="evidence" value="ECO:0000314"/>
    <property type="project" value="RGD"/>
</dbReference>
<dbReference type="GO" id="GO:0031514">
    <property type="term" value="C:motile cilium"/>
    <property type="evidence" value="ECO:0000250"/>
    <property type="project" value="UniProtKB"/>
</dbReference>
<dbReference type="GO" id="GO:0005634">
    <property type="term" value="C:nucleus"/>
    <property type="evidence" value="ECO:0000266"/>
    <property type="project" value="RGD"/>
</dbReference>
<dbReference type="GO" id="GO:0001891">
    <property type="term" value="C:phagocytic cup"/>
    <property type="evidence" value="ECO:0007669"/>
    <property type="project" value="UniProtKB-SubCell"/>
</dbReference>
<dbReference type="GO" id="GO:0005886">
    <property type="term" value="C:plasma membrane"/>
    <property type="evidence" value="ECO:0000266"/>
    <property type="project" value="RGD"/>
</dbReference>
<dbReference type="GO" id="GO:0032991">
    <property type="term" value="C:protein-containing complex"/>
    <property type="evidence" value="ECO:0000314"/>
    <property type="project" value="RGD"/>
</dbReference>
<dbReference type="GO" id="GO:0042383">
    <property type="term" value="C:sarcolemma"/>
    <property type="evidence" value="ECO:0000266"/>
    <property type="project" value="RGD"/>
</dbReference>
<dbReference type="GO" id="GO:0097060">
    <property type="term" value="C:synaptic membrane"/>
    <property type="evidence" value="ECO:0000314"/>
    <property type="project" value="SynGO"/>
</dbReference>
<dbReference type="GO" id="GO:0012506">
    <property type="term" value="C:vesicle membrane"/>
    <property type="evidence" value="ECO:0000318"/>
    <property type="project" value="GO_Central"/>
</dbReference>
<dbReference type="GO" id="GO:0005509">
    <property type="term" value="F:calcium ion binding"/>
    <property type="evidence" value="ECO:0000250"/>
    <property type="project" value="UniProtKB"/>
</dbReference>
<dbReference type="GO" id="GO:0005544">
    <property type="term" value="F:calcium-dependent phospholipid binding"/>
    <property type="evidence" value="ECO:0000250"/>
    <property type="project" value="UniProtKB"/>
</dbReference>
<dbReference type="GO" id="GO:0048306">
    <property type="term" value="F:calcium-dependent protein binding"/>
    <property type="evidence" value="ECO:0000266"/>
    <property type="project" value="RGD"/>
</dbReference>
<dbReference type="GO" id="GO:1990814">
    <property type="term" value="F:DNA/DNA annealing activity"/>
    <property type="evidence" value="ECO:0000314"/>
    <property type="project" value="RGD"/>
</dbReference>
<dbReference type="GO" id="GO:0036121">
    <property type="term" value="F:double-stranded DNA helicase activity"/>
    <property type="evidence" value="ECO:0000314"/>
    <property type="project" value="RGD"/>
</dbReference>
<dbReference type="GO" id="GO:0042802">
    <property type="term" value="F:identical protein binding"/>
    <property type="evidence" value="ECO:0000353"/>
    <property type="project" value="RGD"/>
</dbReference>
<dbReference type="GO" id="GO:0008289">
    <property type="term" value="F:lipid binding"/>
    <property type="evidence" value="ECO:0000266"/>
    <property type="project" value="RGD"/>
</dbReference>
<dbReference type="GO" id="GO:0001786">
    <property type="term" value="F:phosphatidylserine binding"/>
    <property type="evidence" value="ECO:0000318"/>
    <property type="project" value="GO_Central"/>
</dbReference>
<dbReference type="GO" id="GO:0019834">
    <property type="term" value="F:phospholipase A2 inhibitor activity"/>
    <property type="evidence" value="ECO:0000314"/>
    <property type="project" value="RGD"/>
</dbReference>
<dbReference type="GO" id="GO:0005543">
    <property type="term" value="F:phospholipid binding"/>
    <property type="evidence" value="ECO:0000314"/>
    <property type="project" value="RGD"/>
</dbReference>
<dbReference type="GO" id="GO:0003697">
    <property type="term" value="F:single-stranded DNA binding"/>
    <property type="evidence" value="ECO:0000314"/>
    <property type="project" value="RGD"/>
</dbReference>
<dbReference type="GO" id="GO:0030036">
    <property type="term" value="P:actin cytoskeleton organization"/>
    <property type="evidence" value="ECO:0000250"/>
    <property type="project" value="UniProtKB"/>
</dbReference>
<dbReference type="GO" id="GO:0002250">
    <property type="term" value="P:adaptive immune response"/>
    <property type="evidence" value="ECO:0007669"/>
    <property type="project" value="UniProtKB-KW"/>
</dbReference>
<dbReference type="GO" id="GO:0046632">
    <property type="term" value="P:alpha-beta T cell differentiation"/>
    <property type="evidence" value="ECO:0000266"/>
    <property type="project" value="RGD"/>
</dbReference>
<dbReference type="GO" id="GO:0050482">
    <property type="term" value="P:arachidonate secretion"/>
    <property type="evidence" value="ECO:0000266"/>
    <property type="project" value="RGD"/>
</dbReference>
<dbReference type="GO" id="GO:0007166">
    <property type="term" value="P:cell surface receptor signaling pathway"/>
    <property type="evidence" value="ECO:0000314"/>
    <property type="project" value="RGD"/>
</dbReference>
<dbReference type="GO" id="GO:0071385">
    <property type="term" value="P:cellular response to glucocorticoid stimulus"/>
    <property type="evidence" value="ECO:0000314"/>
    <property type="project" value="BHF-UCL"/>
</dbReference>
<dbReference type="GO" id="GO:0070301">
    <property type="term" value="P:cellular response to hydrogen peroxide"/>
    <property type="evidence" value="ECO:0000315"/>
    <property type="project" value="RGD"/>
</dbReference>
<dbReference type="GO" id="GO:0035924">
    <property type="term" value="P:cellular response to vascular endothelial growth factor stimulus"/>
    <property type="evidence" value="ECO:0000266"/>
    <property type="project" value="RGD"/>
</dbReference>
<dbReference type="GO" id="GO:0031018">
    <property type="term" value="P:endocrine pancreas development"/>
    <property type="evidence" value="ECO:0000270"/>
    <property type="project" value="RGD"/>
</dbReference>
<dbReference type="GO" id="GO:0044849">
    <property type="term" value="P:estrous cycle"/>
    <property type="evidence" value="ECO:0000270"/>
    <property type="project" value="RGD"/>
</dbReference>
<dbReference type="GO" id="GO:0007187">
    <property type="term" value="P:G protein-coupled receptor signaling pathway, coupled to cyclic nucleotide second messenger"/>
    <property type="evidence" value="ECO:0000250"/>
    <property type="project" value="UniProtKB"/>
</dbReference>
<dbReference type="GO" id="GO:0042063">
    <property type="term" value="P:gliogenesis"/>
    <property type="evidence" value="ECO:0000270"/>
    <property type="project" value="RGD"/>
</dbReference>
<dbReference type="GO" id="GO:0071621">
    <property type="term" value="P:granulocyte chemotaxis"/>
    <property type="evidence" value="ECO:0000250"/>
    <property type="project" value="UniProtKB"/>
</dbReference>
<dbReference type="GO" id="GO:0070365">
    <property type="term" value="P:hepatocyte differentiation"/>
    <property type="evidence" value="ECO:0000270"/>
    <property type="project" value="RGD"/>
</dbReference>
<dbReference type="GO" id="GO:0006954">
    <property type="term" value="P:inflammatory response"/>
    <property type="evidence" value="ECO:0000250"/>
    <property type="project" value="UniProtKB"/>
</dbReference>
<dbReference type="GO" id="GO:0045087">
    <property type="term" value="P:innate immune response"/>
    <property type="evidence" value="ECO:0007669"/>
    <property type="project" value="UniProtKB-KW"/>
</dbReference>
<dbReference type="GO" id="GO:0030073">
    <property type="term" value="P:insulin secretion"/>
    <property type="evidence" value="ECO:0000314"/>
    <property type="project" value="RGD"/>
</dbReference>
<dbReference type="GO" id="GO:0030216">
    <property type="term" value="P:keratinocyte differentiation"/>
    <property type="evidence" value="ECO:0000266"/>
    <property type="project" value="RGD"/>
</dbReference>
<dbReference type="GO" id="GO:0002548">
    <property type="term" value="P:monocyte chemotaxis"/>
    <property type="evidence" value="ECO:0000250"/>
    <property type="project" value="UniProtKB"/>
</dbReference>
<dbReference type="GO" id="GO:0014839">
    <property type="term" value="P:myoblast migration involved in skeletal muscle regeneration"/>
    <property type="evidence" value="ECO:0000266"/>
    <property type="project" value="RGD"/>
</dbReference>
<dbReference type="GO" id="GO:0045920">
    <property type="term" value="P:negative regulation of exocytosis"/>
    <property type="evidence" value="ECO:0000250"/>
    <property type="project" value="UniProtKB"/>
</dbReference>
<dbReference type="GO" id="GO:0032717">
    <property type="term" value="P:negative regulation of interleukin-8 production"/>
    <property type="evidence" value="ECO:0000266"/>
    <property type="project" value="RGD"/>
</dbReference>
<dbReference type="GO" id="GO:0050709">
    <property type="term" value="P:negative regulation of protein secretion"/>
    <property type="evidence" value="ECO:0000315"/>
    <property type="project" value="RGD"/>
</dbReference>
<dbReference type="GO" id="GO:0045629">
    <property type="term" value="P:negative regulation of T-helper 2 cell differentiation"/>
    <property type="evidence" value="ECO:0000250"/>
    <property type="project" value="UniProtKB"/>
</dbReference>
<dbReference type="GO" id="GO:0042119">
    <property type="term" value="P:neutrophil activation"/>
    <property type="evidence" value="ECO:0000250"/>
    <property type="project" value="UniProtKB"/>
</dbReference>
<dbReference type="GO" id="GO:0097350">
    <property type="term" value="P:neutrophil clearance"/>
    <property type="evidence" value="ECO:0000266"/>
    <property type="project" value="RGD"/>
</dbReference>
<dbReference type="GO" id="GO:0001780">
    <property type="term" value="P:neutrophil homeostasis"/>
    <property type="evidence" value="ECO:0000266"/>
    <property type="project" value="RGD"/>
</dbReference>
<dbReference type="GO" id="GO:0006909">
    <property type="term" value="P:phagocytosis"/>
    <property type="evidence" value="ECO:0000250"/>
    <property type="project" value="UniProtKB"/>
</dbReference>
<dbReference type="GO" id="GO:0043065">
    <property type="term" value="P:positive regulation of apoptotic process"/>
    <property type="evidence" value="ECO:0000315"/>
    <property type="project" value="RGD"/>
</dbReference>
<dbReference type="GO" id="GO:0090050">
    <property type="term" value="P:positive regulation of cell migration involved in sprouting angiogenesis"/>
    <property type="evidence" value="ECO:0000266"/>
    <property type="project" value="RGD"/>
</dbReference>
<dbReference type="GO" id="GO:1900087">
    <property type="term" value="P:positive regulation of G1/S transition of mitotic cell cycle"/>
    <property type="evidence" value="ECO:0000266"/>
    <property type="project" value="RGD"/>
</dbReference>
<dbReference type="GO" id="GO:0032743">
    <property type="term" value="P:positive regulation of interleukin-2 production"/>
    <property type="evidence" value="ECO:0000250"/>
    <property type="project" value="UniProtKB"/>
</dbReference>
<dbReference type="GO" id="GO:0033031">
    <property type="term" value="P:positive regulation of neutrophil apoptotic process"/>
    <property type="evidence" value="ECO:0000266"/>
    <property type="project" value="RGD"/>
</dbReference>
<dbReference type="GO" id="GO:0031394">
    <property type="term" value="P:positive regulation of prostaglandin biosynthetic process"/>
    <property type="evidence" value="ECO:0000315"/>
    <property type="project" value="RGD"/>
</dbReference>
<dbReference type="GO" id="GO:0042102">
    <property type="term" value="P:positive regulation of T cell proliferation"/>
    <property type="evidence" value="ECO:0000250"/>
    <property type="project" value="UniProtKB"/>
</dbReference>
<dbReference type="GO" id="GO:0045627">
    <property type="term" value="P:positive regulation of T-helper 1 cell differentiation"/>
    <property type="evidence" value="ECO:0000250"/>
    <property type="project" value="UniProtKB"/>
</dbReference>
<dbReference type="GO" id="GO:0031340">
    <property type="term" value="P:positive regulation of vesicle fusion"/>
    <property type="evidence" value="ECO:0000266"/>
    <property type="project" value="RGD"/>
</dbReference>
<dbReference type="GO" id="GO:0090303">
    <property type="term" value="P:positive regulation of wound healing"/>
    <property type="evidence" value="ECO:0000250"/>
    <property type="project" value="UniProtKB"/>
</dbReference>
<dbReference type="GO" id="GO:0070459">
    <property type="term" value="P:prolactin secretion"/>
    <property type="evidence" value="ECO:0000315"/>
    <property type="project" value="RGD"/>
</dbReference>
<dbReference type="GO" id="GO:0030850">
    <property type="term" value="P:prostate gland development"/>
    <property type="evidence" value="ECO:0000270"/>
    <property type="project" value="RGD"/>
</dbReference>
<dbReference type="GO" id="GO:0042127">
    <property type="term" value="P:regulation of cell population proliferation"/>
    <property type="evidence" value="ECO:0000266"/>
    <property type="project" value="RGD"/>
</dbReference>
<dbReference type="GO" id="GO:0008360">
    <property type="term" value="P:regulation of cell shape"/>
    <property type="evidence" value="ECO:0000250"/>
    <property type="project" value="UniProtKB"/>
</dbReference>
<dbReference type="GO" id="GO:0046883">
    <property type="term" value="P:regulation of hormone secretion"/>
    <property type="evidence" value="ECO:0000250"/>
    <property type="project" value="UniProtKB"/>
</dbReference>
<dbReference type="GO" id="GO:0050727">
    <property type="term" value="P:regulation of inflammatory response"/>
    <property type="evidence" value="ECO:0000250"/>
    <property type="project" value="UniProtKB"/>
</dbReference>
<dbReference type="GO" id="GO:0032652">
    <property type="term" value="P:regulation of interleukin-1 production"/>
    <property type="evidence" value="ECO:0000250"/>
    <property type="project" value="UniProtKB"/>
</dbReference>
<dbReference type="GO" id="GO:0002685">
    <property type="term" value="P:regulation of leukocyte migration"/>
    <property type="evidence" value="ECO:0000250"/>
    <property type="project" value="UniProtKB"/>
</dbReference>
<dbReference type="GO" id="GO:0032355">
    <property type="term" value="P:response to estradiol"/>
    <property type="evidence" value="ECO:0000270"/>
    <property type="project" value="RGD"/>
</dbReference>
<dbReference type="GO" id="GO:0051384">
    <property type="term" value="P:response to glucocorticoid"/>
    <property type="evidence" value="ECO:0000270"/>
    <property type="project" value="RGD"/>
</dbReference>
<dbReference type="GO" id="GO:0009725">
    <property type="term" value="P:response to hormone"/>
    <property type="evidence" value="ECO:0000270"/>
    <property type="project" value="RGD"/>
</dbReference>
<dbReference type="GO" id="GO:0070555">
    <property type="term" value="P:response to interleukin-1"/>
    <property type="evidence" value="ECO:0000270"/>
    <property type="project" value="RGD"/>
</dbReference>
<dbReference type="GO" id="GO:1904373">
    <property type="term" value="P:response to kainic acid"/>
    <property type="evidence" value="ECO:0000270"/>
    <property type="project" value="RGD"/>
</dbReference>
<dbReference type="GO" id="GO:0043434">
    <property type="term" value="P:response to peptide hormone"/>
    <property type="evidence" value="ECO:0000270"/>
    <property type="project" value="RGD"/>
</dbReference>
<dbReference type="GO" id="GO:0010165">
    <property type="term" value="P:response to X-ray"/>
    <property type="evidence" value="ECO:0000270"/>
    <property type="project" value="RGD"/>
</dbReference>
<dbReference type="GO" id="GO:0009410">
    <property type="term" value="P:response to xenobiotic stimulus"/>
    <property type="evidence" value="ECO:0000270"/>
    <property type="project" value="RGD"/>
</dbReference>
<dbReference type="GO" id="GO:0007165">
    <property type="term" value="P:signal transduction"/>
    <property type="evidence" value="ECO:0000266"/>
    <property type="project" value="RGD"/>
</dbReference>
<dbReference type="FunFam" id="1.10.220.10:FF:000001">
    <property type="entry name" value="Annexin"/>
    <property type="match status" value="1"/>
</dbReference>
<dbReference type="FunFam" id="1.10.220.10:FF:000002">
    <property type="entry name" value="Annexin"/>
    <property type="match status" value="1"/>
</dbReference>
<dbReference type="FunFam" id="1.10.220.10:FF:000003">
    <property type="entry name" value="Annexin"/>
    <property type="match status" value="1"/>
</dbReference>
<dbReference type="FunFam" id="1.10.220.10:FF:000007">
    <property type="entry name" value="Annexin"/>
    <property type="match status" value="1"/>
</dbReference>
<dbReference type="Gene3D" id="1.10.220.10">
    <property type="entry name" value="Annexin"/>
    <property type="match status" value="4"/>
</dbReference>
<dbReference type="InterPro" id="IPR001464">
    <property type="entry name" value="Annexin"/>
</dbReference>
<dbReference type="InterPro" id="IPR018502">
    <property type="entry name" value="Annexin_repeat"/>
</dbReference>
<dbReference type="InterPro" id="IPR018252">
    <property type="entry name" value="Annexin_repeat_CS"/>
</dbReference>
<dbReference type="InterPro" id="IPR037104">
    <property type="entry name" value="Annexin_sf"/>
</dbReference>
<dbReference type="InterPro" id="IPR002388">
    <property type="entry name" value="ANX1"/>
</dbReference>
<dbReference type="PANTHER" id="PTHR10502">
    <property type="entry name" value="ANNEXIN"/>
    <property type="match status" value="1"/>
</dbReference>
<dbReference type="PANTHER" id="PTHR10502:SF17">
    <property type="entry name" value="ANNEXIN A1"/>
    <property type="match status" value="1"/>
</dbReference>
<dbReference type="Pfam" id="PF00191">
    <property type="entry name" value="Annexin"/>
    <property type="match status" value="4"/>
</dbReference>
<dbReference type="PRINTS" id="PR00196">
    <property type="entry name" value="ANNEXIN"/>
</dbReference>
<dbReference type="PRINTS" id="PR00197">
    <property type="entry name" value="ANNEXINI"/>
</dbReference>
<dbReference type="SMART" id="SM00335">
    <property type="entry name" value="ANX"/>
    <property type="match status" value="4"/>
</dbReference>
<dbReference type="SUPFAM" id="SSF47874">
    <property type="entry name" value="Annexin"/>
    <property type="match status" value="1"/>
</dbReference>
<dbReference type="PROSITE" id="PS00223">
    <property type="entry name" value="ANNEXIN_1"/>
    <property type="match status" value="4"/>
</dbReference>
<dbReference type="PROSITE" id="PS51897">
    <property type="entry name" value="ANNEXIN_2"/>
    <property type="match status" value="4"/>
</dbReference>
<proteinExistence type="evidence at protein level"/>
<gene>
    <name type="primary">Anxa1</name>
    <name type="synonym">Anx1</name>
</gene>
<evidence type="ECO:0000250" key="1"/>
<evidence type="ECO:0000250" key="2">
    <source>
        <dbReference type="UniProtKB" id="P04083"/>
    </source>
</evidence>
<evidence type="ECO:0000250" key="3">
    <source>
        <dbReference type="UniProtKB" id="P10107"/>
    </source>
</evidence>
<evidence type="ECO:0000250" key="4">
    <source>
        <dbReference type="UniProtKB" id="P19619"/>
    </source>
</evidence>
<evidence type="ECO:0000250" key="5">
    <source>
        <dbReference type="UniProtKB" id="P51662"/>
    </source>
</evidence>
<evidence type="ECO:0000255" key="6">
    <source>
        <dbReference type="PROSITE-ProRule" id="PRU01245"/>
    </source>
</evidence>
<evidence type="ECO:0000269" key="7">
    <source>
    </source>
</evidence>
<evidence type="ECO:0000269" key="8">
    <source>
    </source>
</evidence>
<evidence type="ECO:0000269" key="9">
    <source ref="5"/>
</evidence>
<evidence type="ECO:0000303" key="10">
    <source>
    </source>
</evidence>
<evidence type="ECO:0000303" key="11">
    <source>
    </source>
</evidence>
<evidence type="ECO:0000305" key="12"/>
<accession>P07150</accession>
<accession>Q64664</accession>
<comment type="function">
    <text evidence="2 3 4 8">Plays important roles in the innate immune response as effector of glucocorticoid-mediated responses and regulator of the inflammatory process. Has anti-inflammatory activity. Plays a role in glucocorticoid-mediated down-regulation of the early phase of the inflammatory response. Contributes to the adaptive immune response by enhancing signaling cascades that are triggered by T-cell activation, regulates differentiation and proliferation of activated T-cells. Promotes the differentiation of T-cells into Th1 cells and negatively regulates differentiation into Th2 cells (By similarity). Has no effect on unstimulated T-cells. Negatively regulates hormone exocytosis via activation of the formyl peptide receptors and reorganization of the actin cytoskeleton (By similarity). Has high affinity for Ca(2+) and can bind up to eight Ca(2+) ions (By similarity). Displays Ca(2+)-dependent binding to phospholipid membranes (PubMed:3020049). Plays a role in the formation of phagocytic cups and phagosomes. Plays a role in phagocytosis by mediating the Ca(2+)-dependent interaction between phagosomes and the actin cytoskeleton (By similarity).</text>
</comment>
<comment type="function">
    <molecule>Annexin Ac2-26</molecule>
    <text evidence="2">Functions at least in part by activating the formyl peptide receptors and downstream signaling cascades. Promotes chemotaxis of granulocytes and monocytes via activation of the formyl peptide receptors. Promotes rearrangement of the actin cytoskeleton, cell polarization and cell migration. Promotes resolution of inflammation and wound healing. Acts via neutrophil N-formyl peptide receptors to enhance the release of CXCL2.</text>
</comment>
<comment type="subunit">
    <text evidence="2 3 4">Homodimer; non-covalently linked (By similarity). Homodimer; linked by transglutamylation. Homodimers linked by transglutamylation are observed in placenta, but not in other tissues. Interacts with S100A11. Heterotetramer, formed by two molecules each of S100A11 and ANXA1 (By similarity). Interacts with DYSF (By similarity). Interacts with EGFR (By similarity).</text>
</comment>
<comment type="subcellular location">
    <subcellularLocation>
        <location evidence="7">Nucleus</location>
    </subcellularLocation>
    <subcellularLocation>
        <location evidence="7">Cytoplasm</location>
    </subcellularLocation>
    <subcellularLocation>
        <location evidence="3">Cell projection</location>
        <location evidence="3">Cilium</location>
    </subcellularLocation>
    <subcellularLocation>
        <location evidence="5">Basolateral cell membrane</location>
    </subcellularLocation>
    <subcellularLocation>
        <location evidence="3">Lateral cell membrane</location>
    </subcellularLocation>
    <subcellularLocation>
        <location evidence="3">Cell membrane</location>
        <topology evidence="3">Peripheral membrane protein</topology>
    </subcellularLocation>
    <subcellularLocation>
        <location evidence="3">Apical cell membrane</location>
    </subcellularLocation>
    <subcellularLocation>
        <location evidence="8">Membrane</location>
        <topology evidence="8">Peripheral membrane protein</topology>
    </subcellularLocation>
    <subcellularLocation>
        <location evidence="8">Endosome membrane</location>
        <topology evidence="8">Peripheral membrane protein</topology>
    </subcellularLocation>
    <subcellularLocation>
        <location evidence="3">Secreted</location>
    </subcellularLocation>
    <subcellularLocation>
        <location evidence="2">Secreted</location>
        <location evidence="2">Extracellular space</location>
    </subcellularLocation>
    <subcellularLocation>
        <location evidence="2">Cell membrane</location>
        <topology evidence="2">Peripheral membrane protein</topology>
        <orientation evidence="2">Extracellular side</orientation>
    </subcellularLocation>
    <subcellularLocation>
        <location evidence="4">Early endosome</location>
    </subcellularLocation>
    <subcellularLocation>
        <location evidence="4">Cytoplasmic vesicle membrane</location>
        <topology evidence="4">Peripheral membrane protein</topology>
    </subcellularLocation>
    <subcellularLocation>
        <location evidence="3">Secreted</location>
        <location evidence="3">Extracellular exosome</location>
    </subcellularLocation>
    <subcellularLocation>
        <location evidence="3">Cytoplasmic vesicle</location>
        <location evidence="3">Secretory vesicle lumen</location>
    </subcellularLocation>
    <subcellularLocation>
        <location evidence="3">Cell projection</location>
        <location evidence="3">Phagocytic cup</location>
    </subcellularLocation>
    <text evidence="2 3 8">Colocalizes with actin fibers at phagocytic cups. Secreted, at least in part via exosomes and other secretory vesicles. Detected in exosomes and other extracellular vesicles. Secretion is increased in response to wounding and inflammation (By similarity). Alternatively, the secretion is dependent on protein unfolding and facilitated by the cargo receptor TMED10; it results in the protein translocation from the cytoplasm into ERGIC (endoplasmic reticulum-Golgi intermediate compartment) followed by vesicle entry and secretion (By similarity). Detected in gelatinase granules in resting neutrophils. Neutrophil adhesion to endothelial cells stimulates secretion via gelatinase granules, but foreign particle phagocytosis has no effect. Displays calcium-dependent binding to phospholipid membranes (PubMed:3020049).</text>
</comment>
<comment type="tissue specificity">
    <text evidence="7 8">Detected in eosinophils (PubMed:12467520). Detected in lung, placenta, spleen and thymus (at protein level) (PubMed:3020049).</text>
</comment>
<comment type="domain">
    <text evidence="4">The full-length protein can bind eight Ca(2+) ions via the annexin repeats. Calcium binding causes a major conformation change that modifies dimer contacts and leads to surface exposure of the N-terminal phosphorylation sites; in the absence of Ca(2+), these sites are buried in the interior of the protein core. The N-terminal region becomes disordered in response to calcium-binding.</text>
</comment>
<comment type="PTM">
    <text evidence="2">Phosphorylated by protein kinase C, EGFR and TRPM7. Phosphorylated in response to EGF treatment.</text>
</comment>
<comment type="PTM">
    <text evidence="3">Sumoylated.</text>
</comment>
<comment type="PTM">
    <text evidence="2">Proteolytically cleaved by cathepsin CTSG to release the active N-terminal peptide Ac2-26.</text>
</comment>
<comment type="miscellaneous">
    <text evidence="3">Was originally identified as calcium and phospholipid binding protein that displays Ca(2+)-dependent binding to phospholipid membranes and can promote membrane aggregation in vitro. Was initially identified as inhibitor of phospholipase A2 activity (in vitro). Inhibition of phospholipase activity is mediated via its phospholipid binding activity that limits the access of phospholipase to its substrates.</text>
</comment>
<comment type="similarity">
    <text evidence="6 12">Belongs to the annexin family.</text>
</comment>